<evidence type="ECO:0000255" key="1">
    <source>
        <dbReference type="HAMAP-Rule" id="MF_00294"/>
    </source>
</evidence>
<evidence type="ECO:0000305" key="2"/>
<name>RK33_NICSY</name>
<gene>
    <name evidence="1" type="primary">rpl33</name>
</gene>
<reference key="1">
    <citation type="journal article" date="2006" name="Mol. Genet. Genomics">
        <title>The chloroplast genome of Nicotiana sylvestris and Nicotiana tomentosiformis: complete sequencing confirms that the Nicotiana sylvestris progenitor is the maternal genome donor of Nicotiana tabacum.</title>
        <authorList>
            <person name="Yukawa M."/>
            <person name="Tsudzuki T."/>
            <person name="Sugiura M."/>
        </authorList>
    </citation>
    <scope>NUCLEOTIDE SEQUENCE [LARGE SCALE GENOMIC DNA]</scope>
</reference>
<sequence length="66" mass="7693">MAKGKDVRVTVILECTSCVRNSVDKVSRGISRYITQKNRHNTPNRLELKKFCPYCYKHTIHGEIKK</sequence>
<protein>
    <recommendedName>
        <fullName evidence="1">Large ribosomal subunit protein bL33c</fullName>
    </recommendedName>
    <alternativeName>
        <fullName evidence="2">50S ribosomal protein L33, chloroplastic</fullName>
    </alternativeName>
</protein>
<feature type="chain" id="PRO_0000276510" description="Large ribosomal subunit protein bL33c">
    <location>
        <begin position="1"/>
        <end position="66"/>
    </location>
</feature>
<comment type="subcellular location">
    <subcellularLocation>
        <location>Plastid</location>
        <location>Chloroplast</location>
    </subcellularLocation>
</comment>
<comment type="similarity">
    <text evidence="1">Belongs to the bacterial ribosomal protein bL33 family.</text>
</comment>
<accession>Q3C1K8</accession>
<dbReference type="EMBL" id="AB237912">
    <property type="protein sequence ID" value="BAE46675.1"/>
    <property type="molecule type" value="Genomic_DNA"/>
</dbReference>
<dbReference type="RefSeq" id="YP_358700.1">
    <property type="nucleotide sequence ID" value="NC_007500.1"/>
</dbReference>
<dbReference type="GeneID" id="3735087"/>
<dbReference type="KEGG" id="nsy:3735087"/>
<dbReference type="OrthoDB" id="17204at4085"/>
<dbReference type="Proteomes" id="UP000189701">
    <property type="component" value="Chloroplast Pltd"/>
</dbReference>
<dbReference type="GO" id="GO:0009507">
    <property type="term" value="C:chloroplast"/>
    <property type="evidence" value="ECO:0007669"/>
    <property type="project" value="UniProtKB-SubCell"/>
</dbReference>
<dbReference type="GO" id="GO:1990904">
    <property type="term" value="C:ribonucleoprotein complex"/>
    <property type="evidence" value="ECO:0007669"/>
    <property type="project" value="UniProtKB-KW"/>
</dbReference>
<dbReference type="GO" id="GO:0005840">
    <property type="term" value="C:ribosome"/>
    <property type="evidence" value="ECO:0007669"/>
    <property type="project" value="UniProtKB-KW"/>
</dbReference>
<dbReference type="GO" id="GO:0003735">
    <property type="term" value="F:structural constituent of ribosome"/>
    <property type="evidence" value="ECO:0007669"/>
    <property type="project" value="InterPro"/>
</dbReference>
<dbReference type="GO" id="GO:0006412">
    <property type="term" value="P:translation"/>
    <property type="evidence" value="ECO:0007669"/>
    <property type="project" value="UniProtKB-UniRule"/>
</dbReference>
<dbReference type="Gene3D" id="2.20.28.120">
    <property type="entry name" value="Ribosomal protein L33"/>
    <property type="match status" value="1"/>
</dbReference>
<dbReference type="HAMAP" id="MF_00294">
    <property type="entry name" value="Ribosomal_bL33"/>
    <property type="match status" value="1"/>
</dbReference>
<dbReference type="InterPro" id="IPR001705">
    <property type="entry name" value="Ribosomal_bL33"/>
</dbReference>
<dbReference type="InterPro" id="IPR018264">
    <property type="entry name" value="Ribosomal_bL33_CS"/>
</dbReference>
<dbReference type="InterPro" id="IPR038584">
    <property type="entry name" value="Ribosomal_bL33_sf"/>
</dbReference>
<dbReference type="InterPro" id="IPR011332">
    <property type="entry name" value="Ribosomal_zn-bd"/>
</dbReference>
<dbReference type="NCBIfam" id="NF001764">
    <property type="entry name" value="PRK00504.1"/>
    <property type="match status" value="1"/>
</dbReference>
<dbReference type="NCBIfam" id="NF001860">
    <property type="entry name" value="PRK00595.1"/>
    <property type="match status" value="1"/>
</dbReference>
<dbReference type="NCBIfam" id="TIGR01023">
    <property type="entry name" value="rpmG_bact"/>
    <property type="match status" value="1"/>
</dbReference>
<dbReference type="PANTHER" id="PTHR43168">
    <property type="entry name" value="50S RIBOSOMAL PROTEIN L33, CHLOROPLASTIC"/>
    <property type="match status" value="1"/>
</dbReference>
<dbReference type="PANTHER" id="PTHR43168:SF2">
    <property type="entry name" value="LARGE RIBOSOMAL SUBUNIT PROTEIN BL33C"/>
    <property type="match status" value="1"/>
</dbReference>
<dbReference type="Pfam" id="PF00471">
    <property type="entry name" value="Ribosomal_L33"/>
    <property type="match status" value="1"/>
</dbReference>
<dbReference type="SUPFAM" id="SSF57829">
    <property type="entry name" value="Zn-binding ribosomal proteins"/>
    <property type="match status" value="1"/>
</dbReference>
<dbReference type="PROSITE" id="PS00582">
    <property type="entry name" value="RIBOSOMAL_L33"/>
    <property type="match status" value="1"/>
</dbReference>
<keyword id="KW-0150">Chloroplast</keyword>
<keyword id="KW-0934">Plastid</keyword>
<keyword id="KW-1185">Reference proteome</keyword>
<keyword id="KW-0687">Ribonucleoprotein</keyword>
<keyword id="KW-0689">Ribosomal protein</keyword>
<geneLocation type="chloroplast"/>
<organism>
    <name type="scientific">Nicotiana sylvestris</name>
    <name type="common">Wood tobacco</name>
    <name type="synonym">South American tobacco</name>
    <dbReference type="NCBI Taxonomy" id="4096"/>
    <lineage>
        <taxon>Eukaryota</taxon>
        <taxon>Viridiplantae</taxon>
        <taxon>Streptophyta</taxon>
        <taxon>Embryophyta</taxon>
        <taxon>Tracheophyta</taxon>
        <taxon>Spermatophyta</taxon>
        <taxon>Magnoliopsida</taxon>
        <taxon>eudicotyledons</taxon>
        <taxon>Gunneridae</taxon>
        <taxon>Pentapetalae</taxon>
        <taxon>asterids</taxon>
        <taxon>lamiids</taxon>
        <taxon>Solanales</taxon>
        <taxon>Solanaceae</taxon>
        <taxon>Nicotianoideae</taxon>
        <taxon>Nicotianeae</taxon>
        <taxon>Nicotiana</taxon>
    </lineage>
</organism>
<proteinExistence type="inferred from homology"/>